<comment type="function">
    <text>Catalyzes the conversion of dihydroorotate to orotate with quinone as electron acceptor.</text>
</comment>
<comment type="catalytic activity">
    <reaction evidence="4">
        <text>(S)-dihydroorotate + a quinone = orotate + a quinol</text>
        <dbReference type="Rhea" id="RHEA:30187"/>
        <dbReference type="ChEBI" id="CHEBI:24646"/>
        <dbReference type="ChEBI" id="CHEBI:30839"/>
        <dbReference type="ChEBI" id="CHEBI:30864"/>
        <dbReference type="ChEBI" id="CHEBI:132124"/>
        <dbReference type="EC" id="1.3.5.2"/>
    </reaction>
</comment>
<comment type="cofactor">
    <cofactor>
        <name>FMN</name>
        <dbReference type="ChEBI" id="CHEBI:58210"/>
    </cofactor>
    <text>Binds 1 FMN per subunit.</text>
</comment>
<comment type="biophysicochemical properties">
    <kinetics>
        <KM evidence="4">40 uM for dihydroorotate</KM>
        <KM evidence="4">112 uM for decylubiquinone</KM>
    </kinetics>
    <phDependence>
        <text evidence="4">Optimum pH is 7.5.</text>
    </phDependence>
</comment>
<comment type="pathway">
    <text>Pyrimidine metabolism; UMP biosynthesis via de novo pathway; orotate from (S)-dihydroorotate (quinone route): step 1/1.</text>
</comment>
<comment type="subcellular location">
    <subcellularLocation>
        <location evidence="5">Mitochondrion inner membrane</location>
        <topology evidence="5">Single-pass membrane protein</topology>
    </subcellularLocation>
</comment>
<comment type="similarity">
    <text evidence="5">Belongs to the dihydroorotate dehydrogenase family. Type 2 subfamily.</text>
</comment>
<comment type="sequence caution" evidence="5">
    <conflict type="erroneous gene model prediction">
        <sequence resource="EMBL-CDS" id="BAB11185"/>
    </conflict>
</comment>
<comment type="sequence caution" evidence="5">
    <conflict type="frameshift">
        <sequence resource="EMBL-CDS" id="CAA44695"/>
    </conflict>
</comment>
<gene>
    <name type="primary">PYRD</name>
    <name type="ordered locus">At5g23300</name>
    <name type="ORF">MKD15.16</name>
</gene>
<keyword id="KW-0285">Flavoprotein</keyword>
<keyword id="KW-0288">FMN</keyword>
<keyword id="KW-0472">Membrane</keyword>
<keyword id="KW-0496">Mitochondrion</keyword>
<keyword id="KW-0999">Mitochondrion inner membrane</keyword>
<keyword id="KW-0560">Oxidoreductase</keyword>
<keyword id="KW-0665">Pyrimidine biosynthesis</keyword>
<keyword id="KW-1185">Reference proteome</keyword>
<keyword id="KW-0809">Transit peptide</keyword>
<keyword id="KW-0812">Transmembrane</keyword>
<keyword id="KW-1133">Transmembrane helix</keyword>
<proteinExistence type="evidence at protein level"/>
<dbReference type="EC" id="1.3.5.2"/>
<dbReference type="EMBL" id="X62909">
    <property type="protein sequence ID" value="CAA44695.1"/>
    <property type="status" value="ALT_FRAME"/>
    <property type="molecule type" value="mRNA"/>
</dbReference>
<dbReference type="EMBL" id="AF454729">
    <property type="protein sequence ID" value="AAN64025.1"/>
    <property type="molecule type" value="mRNA"/>
</dbReference>
<dbReference type="EMBL" id="AB007648">
    <property type="protein sequence ID" value="BAB11185.1"/>
    <property type="status" value="ALT_SEQ"/>
    <property type="molecule type" value="Genomic_DNA"/>
</dbReference>
<dbReference type="EMBL" id="CP002688">
    <property type="protein sequence ID" value="AED93149.1"/>
    <property type="molecule type" value="Genomic_DNA"/>
</dbReference>
<dbReference type="EMBL" id="AK228165">
    <property type="protein sequence ID" value="BAF00121.1"/>
    <property type="molecule type" value="mRNA"/>
</dbReference>
<dbReference type="EMBL" id="BT026524">
    <property type="protein sequence ID" value="ABH04631.1"/>
    <property type="molecule type" value="mRNA"/>
</dbReference>
<dbReference type="PIR" id="S23762">
    <property type="entry name" value="S23762"/>
</dbReference>
<dbReference type="RefSeq" id="NP_568428.1">
    <property type="nucleotide sequence ID" value="NM_122236.3"/>
</dbReference>
<dbReference type="SMR" id="P32746"/>
<dbReference type="FunCoup" id="P32746">
    <property type="interactions" value="3135"/>
</dbReference>
<dbReference type="STRING" id="3702.P32746"/>
<dbReference type="MetOSite" id="P32746"/>
<dbReference type="SwissPalm" id="P32746"/>
<dbReference type="PaxDb" id="3702-AT5G23300.1"/>
<dbReference type="ProteomicsDB" id="224822"/>
<dbReference type="EnsemblPlants" id="AT5G23300.1">
    <property type="protein sequence ID" value="AT5G23300.1"/>
    <property type="gene ID" value="AT5G23300"/>
</dbReference>
<dbReference type="GeneID" id="832394"/>
<dbReference type="Gramene" id="AT5G23300.1">
    <property type="protein sequence ID" value="AT5G23300.1"/>
    <property type="gene ID" value="AT5G23300"/>
</dbReference>
<dbReference type="KEGG" id="ath:AT5G23300"/>
<dbReference type="Araport" id="AT5G23300"/>
<dbReference type="TAIR" id="AT5G23300">
    <property type="gene designation" value="PYRD"/>
</dbReference>
<dbReference type="eggNOG" id="KOG1436">
    <property type="taxonomic scope" value="Eukaryota"/>
</dbReference>
<dbReference type="HOGENOM" id="CLU_013640_0_0_1"/>
<dbReference type="InParanoid" id="P32746"/>
<dbReference type="OMA" id="IYGTDTR"/>
<dbReference type="PhylomeDB" id="P32746"/>
<dbReference type="BioCyc" id="ARA:AT5G23300-MONOMER"/>
<dbReference type="BioCyc" id="MetaCyc:AT5G23300-MONOMER"/>
<dbReference type="BRENDA" id="1.3.5.2">
    <property type="organism ID" value="399"/>
</dbReference>
<dbReference type="UniPathway" id="UPA00070">
    <property type="reaction ID" value="UER00946"/>
</dbReference>
<dbReference type="PRO" id="PR:P32746"/>
<dbReference type="Proteomes" id="UP000006548">
    <property type="component" value="Chromosome 5"/>
</dbReference>
<dbReference type="ExpressionAtlas" id="P32746">
    <property type="expression patterns" value="baseline and differential"/>
</dbReference>
<dbReference type="GO" id="GO:0005743">
    <property type="term" value="C:mitochondrial inner membrane"/>
    <property type="evidence" value="ECO:0007669"/>
    <property type="project" value="UniProtKB-SubCell"/>
</dbReference>
<dbReference type="GO" id="GO:0005739">
    <property type="term" value="C:mitochondrion"/>
    <property type="evidence" value="ECO:0007005"/>
    <property type="project" value="TAIR"/>
</dbReference>
<dbReference type="GO" id="GO:0009536">
    <property type="term" value="C:plastid"/>
    <property type="evidence" value="ECO:0007005"/>
    <property type="project" value="TAIR"/>
</dbReference>
<dbReference type="GO" id="GO:0106430">
    <property type="term" value="F:dihydroorotate dehydrogenase (quinone) activity"/>
    <property type="evidence" value="ECO:0007669"/>
    <property type="project" value="UniProtKB-EC"/>
</dbReference>
<dbReference type="GO" id="GO:0004152">
    <property type="term" value="F:dihydroorotate dehydrogenase activity"/>
    <property type="evidence" value="ECO:0000314"/>
    <property type="project" value="TAIR"/>
</dbReference>
<dbReference type="GO" id="GO:0006207">
    <property type="term" value="P:'de novo' pyrimidine nucleobase biosynthetic process"/>
    <property type="evidence" value="ECO:0007669"/>
    <property type="project" value="InterPro"/>
</dbReference>
<dbReference type="GO" id="GO:0044205">
    <property type="term" value="P:'de novo' UMP biosynthetic process"/>
    <property type="evidence" value="ECO:0007669"/>
    <property type="project" value="UniProtKB-UniPathway"/>
</dbReference>
<dbReference type="GO" id="GO:0009220">
    <property type="term" value="P:pyrimidine ribonucleotide biosynthetic process"/>
    <property type="evidence" value="ECO:0000314"/>
    <property type="project" value="TAIR"/>
</dbReference>
<dbReference type="CDD" id="cd04738">
    <property type="entry name" value="DHOD_2_like"/>
    <property type="match status" value="1"/>
</dbReference>
<dbReference type="FunFam" id="3.20.20.70:FF:000066">
    <property type="entry name" value="Dihydroorotate dehydrogenase (quinone), mitochondrial"/>
    <property type="match status" value="1"/>
</dbReference>
<dbReference type="Gene3D" id="3.20.20.70">
    <property type="entry name" value="Aldolase class I"/>
    <property type="match status" value="1"/>
</dbReference>
<dbReference type="InterPro" id="IPR013785">
    <property type="entry name" value="Aldolase_TIM"/>
</dbReference>
<dbReference type="InterPro" id="IPR050074">
    <property type="entry name" value="DHO_dehydrogenase"/>
</dbReference>
<dbReference type="InterPro" id="IPR005719">
    <property type="entry name" value="Dihydroorotate_DH_2"/>
</dbReference>
<dbReference type="InterPro" id="IPR005720">
    <property type="entry name" value="Dihydroorotate_DH_cat"/>
</dbReference>
<dbReference type="InterPro" id="IPR001295">
    <property type="entry name" value="Dihydroorotate_DH_CS"/>
</dbReference>
<dbReference type="NCBIfam" id="NF003645">
    <property type="entry name" value="PRK05286.1-2"/>
    <property type="match status" value="1"/>
</dbReference>
<dbReference type="NCBIfam" id="NF003652">
    <property type="entry name" value="PRK05286.2-5"/>
    <property type="match status" value="1"/>
</dbReference>
<dbReference type="NCBIfam" id="TIGR01036">
    <property type="entry name" value="pyrD_sub2"/>
    <property type="match status" value="1"/>
</dbReference>
<dbReference type="PANTHER" id="PTHR48109:SF4">
    <property type="entry name" value="DIHYDROOROTATE DEHYDROGENASE (QUINONE), MITOCHONDRIAL"/>
    <property type="match status" value="1"/>
</dbReference>
<dbReference type="PANTHER" id="PTHR48109">
    <property type="entry name" value="DIHYDROOROTATE DEHYDROGENASE (QUINONE), MITOCHONDRIAL-RELATED"/>
    <property type="match status" value="1"/>
</dbReference>
<dbReference type="Pfam" id="PF01180">
    <property type="entry name" value="DHO_dh"/>
    <property type="match status" value="1"/>
</dbReference>
<dbReference type="SUPFAM" id="SSF51395">
    <property type="entry name" value="FMN-linked oxidoreductases"/>
    <property type="match status" value="1"/>
</dbReference>
<dbReference type="PROSITE" id="PS00911">
    <property type="entry name" value="DHODEHASE_1"/>
    <property type="match status" value="1"/>
</dbReference>
<dbReference type="PROSITE" id="PS00912">
    <property type="entry name" value="DHODEHASE_2"/>
    <property type="match status" value="1"/>
</dbReference>
<reference key="1">
    <citation type="journal article" date="1992" name="Plant J.">
        <title>Complementation of Saccharomyces cerevisiae auxotrophic mutants by Arabidopsis thaliana cDNAs.</title>
        <authorList>
            <person name="Minet M."/>
            <person name="Dufour M.E."/>
            <person name="Lacroute F."/>
        </authorList>
    </citation>
    <scope>NUCLEOTIDE SEQUENCE [MRNA]</scope>
</reference>
<reference key="2">
    <citation type="journal article" date="2002" name="FEBS Lett.">
        <title>Plant dihydroorotate dehydrogenase differs significantly in substrate specificity and inhibition from the animal enzymes.</title>
        <authorList>
            <person name="Ullrich A."/>
            <person name="Knecht W."/>
            <person name="Piskur J."/>
            <person name="Loeffler M."/>
        </authorList>
    </citation>
    <scope>NUCLEOTIDE SEQUENCE [MRNA]</scope>
    <scope>CATALYTIC ACTIVITY</scope>
    <scope>BIOPHYSICOCHEMICAL PROPERTIES</scope>
</reference>
<reference key="3">
    <citation type="journal article" date="1997" name="DNA Res.">
        <title>Structural analysis of Arabidopsis thaliana chromosome 5. III. Sequence features of the regions of 1,191,918 bp covered by seventeen physically assigned P1 clones.</title>
        <authorList>
            <person name="Nakamura Y."/>
            <person name="Sato S."/>
            <person name="Kaneko T."/>
            <person name="Kotani H."/>
            <person name="Asamizu E."/>
            <person name="Miyajima N."/>
            <person name="Tabata S."/>
        </authorList>
    </citation>
    <scope>NUCLEOTIDE SEQUENCE [LARGE SCALE GENOMIC DNA]</scope>
    <source>
        <strain>cv. Columbia</strain>
    </source>
</reference>
<reference key="4">
    <citation type="journal article" date="2017" name="Plant J.">
        <title>Araport11: a complete reannotation of the Arabidopsis thaliana reference genome.</title>
        <authorList>
            <person name="Cheng C.Y."/>
            <person name="Krishnakumar V."/>
            <person name="Chan A.P."/>
            <person name="Thibaud-Nissen F."/>
            <person name="Schobel S."/>
            <person name="Town C.D."/>
        </authorList>
    </citation>
    <scope>GENOME REANNOTATION</scope>
    <source>
        <strain>cv. Columbia</strain>
    </source>
</reference>
<reference key="5">
    <citation type="submission" date="2006-07" db="EMBL/GenBank/DDBJ databases">
        <title>Large-scale analysis of RIKEN Arabidopsis full-length (RAFL) cDNAs.</title>
        <authorList>
            <person name="Totoki Y."/>
            <person name="Seki M."/>
            <person name="Ishida J."/>
            <person name="Nakajima M."/>
            <person name="Enju A."/>
            <person name="Kamiya A."/>
            <person name="Narusaka M."/>
            <person name="Shin-i T."/>
            <person name="Nakagawa M."/>
            <person name="Sakamoto N."/>
            <person name="Oishi K."/>
            <person name="Kohara Y."/>
            <person name="Kobayashi M."/>
            <person name="Toyoda A."/>
            <person name="Sakaki Y."/>
            <person name="Sakurai T."/>
            <person name="Iida K."/>
            <person name="Akiyama K."/>
            <person name="Satou M."/>
            <person name="Toyoda T."/>
            <person name="Konagaya A."/>
            <person name="Carninci P."/>
            <person name="Kawai J."/>
            <person name="Hayashizaki Y."/>
            <person name="Shinozaki K."/>
        </authorList>
    </citation>
    <scope>NUCLEOTIDE SEQUENCE [LARGE SCALE MRNA]</scope>
    <source>
        <strain>cv. Columbia</strain>
    </source>
</reference>
<reference key="6">
    <citation type="submission" date="2006-08" db="EMBL/GenBank/DDBJ databases">
        <title>Arabidopsis ORF Clones.</title>
        <authorList>
            <person name="Quinitio C."/>
            <person name="Chen H."/>
            <person name="Kim C.J."/>
            <person name="Shinn P."/>
            <person name="Ecker J.R."/>
        </authorList>
    </citation>
    <scope>NUCLEOTIDE SEQUENCE [LARGE SCALE MRNA]</scope>
    <source>
        <strain>cv. Columbia</strain>
    </source>
</reference>
<reference key="7">
    <citation type="journal article" date="2004" name="Plant Cell">
        <title>Experimental analysis of the Arabidopsis mitochondrial proteome highlights signaling and regulatory components, provides assessment of targeting prediction programs, and indicates plant-specific mitochondrial proteins.</title>
        <authorList>
            <person name="Heazlewood J.L."/>
            <person name="Tonti-Filippini J.S."/>
            <person name="Gout A.M."/>
            <person name="Day D.A."/>
            <person name="Whelan J."/>
            <person name="Millar A.H."/>
        </authorList>
    </citation>
    <scope>IDENTIFICATION BY MASS SPECTROMETRY</scope>
    <scope>SUBCELLULAR LOCATION [LARGE SCALE ANALYSIS]</scope>
    <source>
        <strain>cv. Landsberg erecta</strain>
    </source>
</reference>
<evidence type="ECO:0000250" key="1"/>
<evidence type="ECO:0000255" key="2"/>
<evidence type="ECO:0000256" key="3">
    <source>
        <dbReference type="SAM" id="MobiDB-lite"/>
    </source>
</evidence>
<evidence type="ECO:0000269" key="4">
    <source>
    </source>
</evidence>
<evidence type="ECO:0000305" key="5"/>
<name>PYRD_ARATH</name>
<organism>
    <name type="scientific">Arabidopsis thaliana</name>
    <name type="common">Mouse-ear cress</name>
    <dbReference type="NCBI Taxonomy" id="3702"/>
    <lineage>
        <taxon>Eukaryota</taxon>
        <taxon>Viridiplantae</taxon>
        <taxon>Streptophyta</taxon>
        <taxon>Embryophyta</taxon>
        <taxon>Tracheophyta</taxon>
        <taxon>Spermatophyta</taxon>
        <taxon>Magnoliopsida</taxon>
        <taxon>eudicotyledons</taxon>
        <taxon>Gunneridae</taxon>
        <taxon>Pentapetalae</taxon>
        <taxon>rosids</taxon>
        <taxon>malvids</taxon>
        <taxon>Brassicales</taxon>
        <taxon>Brassicaceae</taxon>
        <taxon>Camelineae</taxon>
        <taxon>Arabidopsis</taxon>
    </lineage>
</organism>
<feature type="transit peptide" description="Mitochondrion" evidence="2">
    <location>
        <begin position="1"/>
        <end position="32"/>
    </location>
</feature>
<feature type="chain" id="PRO_0000029889" description="Dihydroorotate dehydrogenase (quinone), mitochondrial">
    <location>
        <begin position="33"/>
        <end position="460"/>
    </location>
</feature>
<feature type="transmembrane region" description="Helical" evidence="2">
    <location>
        <begin position="53"/>
        <end position="69"/>
    </location>
</feature>
<feature type="region of interest" description="Disordered" evidence="3">
    <location>
        <begin position="213"/>
        <end position="245"/>
    </location>
</feature>
<feature type="active site" description="Nucleophile" evidence="1">
    <location>
        <position position="277"/>
    </location>
</feature>
<feature type="binding site" evidence="1">
    <location>
        <begin position="141"/>
        <end position="145"/>
    </location>
    <ligand>
        <name>FMN</name>
        <dbReference type="ChEBI" id="CHEBI:58210"/>
    </ligand>
</feature>
<feature type="binding site" evidence="1">
    <location>
        <position position="145"/>
    </location>
    <ligand>
        <name>substrate</name>
    </ligand>
</feature>
<feature type="binding site" evidence="1">
    <location>
        <position position="165"/>
    </location>
    <ligand>
        <name>FMN</name>
        <dbReference type="ChEBI" id="CHEBI:58210"/>
    </ligand>
</feature>
<feature type="binding site" evidence="1">
    <location>
        <begin position="190"/>
        <end position="194"/>
    </location>
    <ligand>
        <name>substrate</name>
    </ligand>
</feature>
<feature type="binding site" evidence="1">
    <location>
        <position position="243"/>
    </location>
    <ligand>
        <name>FMN</name>
        <dbReference type="ChEBI" id="CHEBI:58210"/>
    </ligand>
</feature>
<feature type="binding site" evidence="1">
    <location>
        <begin position="274"/>
        <end position="279"/>
    </location>
    <ligand>
        <name>substrate</name>
    </ligand>
</feature>
<feature type="binding site" evidence="1">
    <location>
        <position position="274"/>
    </location>
    <ligand>
        <name>FMN</name>
        <dbReference type="ChEBI" id="CHEBI:58210"/>
    </ligand>
</feature>
<feature type="binding site" evidence="1">
    <location>
        <position position="319"/>
    </location>
    <ligand>
        <name>FMN</name>
        <dbReference type="ChEBI" id="CHEBI:58210"/>
    </ligand>
</feature>
<feature type="binding site" evidence="1">
    <location>
        <position position="347"/>
    </location>
    <ligand>
        <name>FMN</name>
        <dbReference type="ChEBI" id="CHEBI:58210"/>
    </ligand>
</feature>
<feature type="binding site" evidence="1">
    <location>
        <begin position="348"/>
        <end position="349"/>
    </location>
    <ligand>
        <name>substrate</name>
    </ligand>
</feature>
<feature type="binding site" evidence="1">
    <location>
        <position position="371"/>
    </location>
    <ligand>
        <name>FMN</name>
        <dbReference type="ChEBI" id="CHEBI:58210"/>
    </ligand>
</feature>
<feature type="binding site" evidence="1">
    <location>
        <position position="400"/>
    </location>
    <ligand>
        <name>FMN</name>
        <dbReference type="ChEBI" id="CHEBI:58210"/>
    </ligand>
</feature>
<feature type="binding site" evidence="1">
    <location>
        <begin position="421"/>
        <end position="422"/>
    </location>
    <ligand>
        <name>FMN</name>
        <dbReference type="ChEBI" id="CHEBI:58210"/>
    </ligand>
</feature>
<sequence>MAGRAATSSAKWAREFLFRRVSSNPLGATRNCSSVPGASSAPKVPHFSKRGRILTGATIGLAIAGGAYVSTADEATFCGWLFNATKVVNPFFALLDAEFAHKLAVSAAARGWVPREKRPDPAILGLEVWGRKFSNPIGLAAGFDKNAEATEGLLGMGFGFVEVGSVTPVPQEGNPKPRIFRLSQEGAIINRCGFNSEGIVVVAKRLGAQHGKRMLAETSATSSSPSDDVKPGGKSGPGILGVNLGKNKTSEDAAADYVQGVHNLSQYADYLVINVSSPNTAGLRMLQGRKQLKDLVKKVQAARDEMQWGDEGPPPLLVKIAPDLSRGELEDIAAVALALHLDGLIISNTTVSRPDAVSNNPVATETGGLSGKPLFALSTNMLRDMYTLTRGKIPLIGCGGVSSGEDAYKKIRAGATLVQLYTGFAYGGPALIPQIKEELVKCLERDGFKSIHEAIGADHR</sequence>
<protein>
    <recommendedName>
        <fullName>Dihydroorotate dehydrogenase (quinone), mitochondrial</fullName>
        <shortName>DHOdehase</shortName>
        <ecNumber>1.3.5.2</ecNumber>
    </recommendedName>
    <alternativeName>
        <fullName>Dihydroorotate oxidase</fullName>
    </alternativeName>
</protein>
<accession>P32746</accession>
<accession>Q0WRX8</accession>
<accession>Q9FMX1</accession>